<name>UXS1_DANRE</name>
<keyword id="KW-0210">Decarboxylase</keyword>
<keyword id="KW-0217">Developmental protein</keyword>
<keyword id="KW-0325">Glycoprotein</keyword>
<keyword id="KW-0333">Golgi apparatus</keyword>
<keyword id="KW-0456">Lyase</keyword>
<keyword id="KW-0472">Membrane</keyword>
<keyword id="KW-0520">NAD</keyword>
<keyword id="KW-1185">Reference proteome</keyword>
<keyword id="KW-0735">Signal-anchor</keyword>
<keyword id="KW-0812">Transmembrane</keyword>
<keyword id="KW-1133">Transmembrane helix</keyword>
<reference key="1">
    <citation type="journal article" date="2002" name="Nat. Genet.">
        <title>Insertional mutagenesis in zebrafish rapidly identifies genes essential for early vertebrate development.</title>
        <authorList>
            <person name="Golling G."/>
            <person name="Amsterdam A."/>
            <person name="Sun Z."/>
            <person name="Antonelli M."/>
            <person name="Maldonado E."/>
            <person name="Chen W."/>
            <person name="Burgess S."/>
            <person name="Haldi M."/>
            <person name="Artzt K."/>
            <person name="Farrington S."/>
            <person name="Lin S.-Y."/>
            <person name="Nissen R.M."/>
            <person name="Hopkins N."/>
        </authorList>
    </citation>
    <scope>NUCLEOTIDE SEQUENCE [LARGE SCALE MRNA]</scope>
    <scope>FUNCTION</scope>
    <source>
        <tissue>Embryo</tissue>
    </source>
</reference>
<reference key="2">
    <citation type="submission" date="2004-06" db="EMBL/GenBank/DDBJ databases">
        <authorList>
            <consortium name="NIH - Zebrafish Gene Collection (ZGC) project"/>
        </authorList>
    </citation>
    <scope>NUCLEOTIDE SEQUENCE [LARGE SCALE MRNA]</scope>
</reference>
<reference key="3">
    <citation type="journal article" date="2006" name="BMC Dev. Biol.">
        <title>A zebrafish screen for craniofacial mutants identifies wdr68 as a highly conserved gene required for endothelin-1 expression.</title>
        <authorList>
            <person name="Nissen R.M."/>
            <person name="Amsterdam A."/>
            <person name="Hopkins N."/>
        </authorList>
    </citation>
    <scope>FUNCTION</scope>
    <scope>DISRUPTION PHENOTYPE</scope>
</reference>
<reference key="4">
    <citation type="journal article" date="2010" name="Dev. Biol.">
        <title>UDP xylose synthase 1 is required for morphogenesis and histogenesis of the craniofacial skeleton.</title>
        <authorList>
            <person name="Eames B.F."/>
            <person name="Singer A."/>
            <person name="Smith G.A."/>
            <person name="Wood Z.A."/>
            <person name="Yan Y.L."/>
            <person name="He X."/>
            <person name="Polizzi S.J."/>
            <person name="Catchen J.M."/>
            <person name="Rodriguez-Mari A."/>
            <person name="Linbo T."/>
            <person name="Raible D.W."/>
            <person name="Postlethwait J.H."/>
        </authorList>
    </citation>
    <scope>FUNCTION</scope>
    <scope>CATALYTIC ACTIVITY</scope>
    <scope>DEVELOPMENTAL STAGE</scope>
    <scope>MUTAGENESIS OF ARG-234</scope>
</reference>
<dbReference type="EC" id="4.1.1.35" evidence="11"/>
<dbReference type="EMBL" id="AF506235">
    <property type="protein sequence ID" value="AAM34679.1"/>
    <property type="molecule type" value="mRNA"/>
</dbReference>
<dbReference type="EMBL" id="BC074058">
    <property type="protein sequence ID" value="AAH74058.1"/>
    <property type="status" value="ALT_INIT"/>
    <property type="molecule type" value="mRNA"/>
</dbReference>
<dbReference type="RefSeq" id="NP_775349.2">
    <property type="nucleotide sequence ID" value="NM_173242.2"/>
</dbReference>
<dbReference type="SMR" id="Q6GMI9"/>
<dbReference type="FunCoup" id="Q6GMI9">
    <property type="interactions" value="1048"/>
</dbReference>
<dbReference type="STRING" id="7955.ENSDARP00000072986"/>
<dbReference type="GlyCosmos" id="Q6GMI9">
    <property type="glycosylation" value="2 sites, No reported glycans"/>
</dbReference>
<dbReference type="PaxDb" id="7955-ENSDARP00000072986"/>
<dbReference type="Ensembl" id="ENSDART00000078525">
    <property type="protein sequence ID" value="ENSDARP00000072986"/>
    <property type="gene ID" value="ENSDARG00000056102"/>
</dbReference>
<dbReference type="GeneID" id="192315"/>
<dbReference type="KEGG" id="dre:192315"/>
<dbReference type="AGR" id="ZFIN:ZDB-GENE-020419-37"/>
<dbReference type="CTD" id="80146"/>
<dbReference type="ZFIN" id="ZDB-GENE-020419-37">
    <property type="gene designation" value="uxs1"/>
</dbReference>
<dbReference type="eggNOG" id="KOG1429">
    <property type="taxonomic scope" value="Eukaryota"/>
</dbReference>
<dbReference type="HOGENOM" id="CLU_007383_4_3_1"/>
<dbReference type="InParanoid" id="Q6GMI9"/>
<dbReference type="OMA" id="KYPKVKY"/>
<dbReference type="OrthoDB" id="331544at2759"/>
<dbReference type="PhylomeDB" id="Q6GMI9"/>
<dbReference type="TreeFam" id="TF105736"/>
<dbReference type="Reactome" id="R-DRE-173599">
    <property type="pathway name" value="Formation of the active cofactor, UDP-glucuronate"/>
</dbReference>
<dbReference type="Reactome" id="R-DRE-1971475">
    <property type="pathway name" value="A tetrasaccharide linker sequence is required for GAG synthesis"/>
</dbReference>
<dbReference type="UniPathway" id="UPA00796">
    <property type="reaction ID" value="UER00771"/>
</dbReference>
<dbReference type="PRO" id="PR:Q6GMI9"/>
<dbReference type="Proteomes" id="UP000000437">
    <property type="component" value="Chromosome 9"/>
</dbReference>
<dbReference type="Bgee" id="ENSDARG00000056102">
    <property type="expression patterns" value="Expressed in intestine and 52 other cell types or tissues"/>
</dbReference>
<dbReference type="ExpressionAtlas" id="Q6GMI9">
    <property type="expression patterns" value="baseline and differential"/>
</dbReference>
<dbReference type="GO" id="GO:0005737">
    <property type="term" value="C:cytoplasm"/>
    <property type="evidence" value="ECO:0000318"/>
    <property type="project" value="GO_Central"/>
</dbReference>
<dbReference type="GO" id="GO:0032580">
    <property type="term" value="C:Golgi cisterna membrane"/>
    <property type="evidence" value="ECO:0007669"/>
    <property type="project" value="UniProtKB-SubCell"/>
</dbReference>
<dbReference type="GO" id="GO:0070403">
    <property type="term" value="F:NAD+ binding"/>
    <property type="evidence" value="ECO:0000318"/>
    <property type="project" value="GO_Central"/>
</dbReference>
<dbReference type="GO" id="GO:0048040">
    <property type="term" value="F:UDP-glucuronate decarboxylase activity"/>
    <property type="evidence" value="ECO:0000314"/>
    <property type="project" value="UniProtKB"/>
</dbReference>
<dbReference type="GO" id="GO:0051216">
    <property type="term" value="P:cartilage development"/>
    <property type="evidence" value="ECO:0000315"/>
    <property type="project" value="ZFIN"/>
</dbReference>
<dbReference type="GO" id="GO:0050650">
    <property type="term" value="P:chondroitin sulfate proteoglycan biosynthetic process"/>
    <property type="evidence" value="ECO:0000315"/>
    <property type="project" value="ZFIN"/>
</dbReference>
<dbReference type="GO" id="GO:0042732">
    <property type="term" value="P:D-xylose metabolic process"/>
    <property type="evidence" value="ECO:0007669"/>
    <property type="project" value="InterPro"/>
</dbReference>
<dbReference type="GO" id="GO:0030198">
    <property type="term" value="P:extracellular matrix organization"/>
    <property type="evidence" value="ECO:0000315"/>
    <property type="project" value="ZFIN"/>
</dbReference>
<dbReference type="GO" id="GO:0015012">
    <property type="term" value="P:heparan sulfate proteoglycan biosynthetic process"/>
    <property type="evidence" value="ECO:0000315"/>
    <property type="project" value="ZFIN"/>
</dbReference>
<dbReference type="GO" id="GO:0001503">
    <property type="term" value="P:ossification"/>
    <property type="evidence" value="ECO:0000315"/>
    <property type="project" value="ZFIN"/>
</dbReference>
<dbReference type="GO" id="GO:0030166">
    <property type="term" value="P:proteoglycan biosynthetic process"/>
    <property type="evidence" value="ECO:0000315"/>
    <property type="project" value="ZFIN"/>
</dbReference>
<dbReference type="GO" id="GO:0033320">
    <property type="term" value="P:UDP-D-xylose biosynthetic process"/>
    <property type="evidence" value="ECO:0007669"/>
    <property type="project" value="UniProtKB-UniPathway"/>
</dbReference>
<dbReference type="CDD" id="cd05230">
    <property type="entry name" value="UGD_SDR_e"/>
    <property type="match status" value="1"/>
</dbReference>
<dbReference type="FunFam" id="3.40.50.720:FF:000065">
    <property type="entry name" value="UDP-glucuronic acid decarboxylase 1"/>
    <property type="match status" value="1"/>
</dbReference>
<dbReference type="Gene3D" id="3.40.50.720">
    <property type="entry name" value="NAD(P)-binding Rossmann-like Domain"/>
    <property type="match status" value="2"/>
</dbReference>
<dbReference type="InterPro" id="IPR016040">
    <property type="entry name" value="NAD(P)-bd_dom"/>
</dbReference>
<dbReference type="InterPro" id="IPR036291">
    <property type="entry name" value="NAD(P)-bd_dom_sf"/>
</dbReference>
<dbReference type="InterPro" id="IPR044516">
    <property type="entry name" value="UXS-like"/>
</dbReference>
<dbReference type="InterPro" id="IPR021761">
    <property type="entry name" value="UXS1_N"/>
</dbReference>
<dbReference type="PANTHER" id="PTHR43078:SF6">
    <property type="entry name" value="UDP-GLUCURONIC ACID DECARBOXYLASE 1"/>
    <property type="match status" value="1"/>
</dbReference>
<dbReference type="PANTHER" id="PTHR43078">
    <property type="entry name" value="UDP-GLUCURONIC ACID DECARBOXYLASE-RELATED"/>
    <property type="match status" value="1"/>
</dbReference>
<dbReference type="Pfam" id="PF16363">
    <property type="entry name" value="GDP_Man_Dehyd"/>
    <property type="match status" value="1"/>
</dbReference>
<dbReference type="Pfam" id="PF11803">
    <property type="entry name" value="UXS1_N"/>
    <property type="match status" value="1"/>
</dbReference>
<dbReference type="SUPFAM" id="SSF51735">
    <property type="entry name" value="NAD(P)-binding Rossmann-fold domains"/>
    <property type="match status" value="1"/>
</dbReference>
<gene>
    <name evidence="8" type="primary">uxs1</name>
    <name evidence="9" type="ORF">zgc:91980</name>
</gene>
<proteinExistence type="evidence at protein level"/>
<sequence>MMRMSWMVTVINRRMMKILIALALIAYIASVWGTYANMRSIQEHGEMKIEQRIDEAVGPLREKIRELELSFTQKYPPVKFLSEKDRKRILITGGAGFVGSHLTDKLMMDGHEVTVVDNFFTGRKRNVEHWIGHENFELINHDVVEPLYIEVDQIYHLASPASPPNYMYNPIKTLKTNTIGTLNMLGLAKRVGARLLLASTSEVYGDPEVHPQNEDYWGHVNPIGPRACYDEGKRVAETMCYAYMKQEGVEVRVARIFNTFGSRMHMNDGRVVSNFILQALQGEALTVYGSGSQTRAFQYVSDLVNGLVSLMNSNISSPVNLGNPEEHTILEFAQLIKSLVASRSHIQFLPEAQDDPQRRRPDIRKAKLLLGWEPVVPLEEGLNKTIQYFSRELEHQANNQYIPKPKAARMKKGRPRHN</sequence>
<comment type="function">
    <text evidence="5 6 7">Catalyzes the NAD-dependent decarboxylation of UDP-glucuronic acid to UDP-xylose (PubMed:20226781). Necessary for the biosynthesis of the core tetrasaccharide in glycosaminoglycan biosynthesis (PubMed:20226781). Essential during embryogenesis for craniofacial development (PubMed:12006978, PubMed:16759393, PubMed:20226781).</text>
</comment>
<comment type="catalytic activity">
    <reaction evidence="11">
        <text>UDP-alpha-D-glucuronate + H(+) = UDP-alpha-D-xylose + CO2</text>
        <dbReference type="Rhea" id="RHEA:23916"/>
        <dbReference type="ChEBI" id="CHEBI:15378"/>
        <dbReference type="ChEBI" id="CHEBI:16526"/>
        <dbReference type="ChEBI" id="CHEBI:57632"/>
        <dbReference type="ChEBI" id="CHEBI:58052"/>
        <dbReference type="EC" id="4.1.1.35"/>
    </reaction>
    <physiologicalReaction direction="left-to-right" evidence="11">
        <dbReference type="Rhea" id="RHEA:23917"/>
    </physiologicalReaction>
</comment>
<comment type="cofactor">
    <cofactor evidence="2">
        <name>NAD(+)</name>
        <dbReference type="ChEBI" id="CHEBI:57540"/>
    </cofactor>
</comment>
<comment type="pathway">
    <text evidence="2">Nucleotide-sugar biosynthesis; UDP-alpha-D-xylose biosynthesis; UDP-alpha-D-xylose from UDP-alpha-D-glucuronate: step 1/1.</text>
</comment>
<comment type="subunit">
    <text evidence="2">Homodimer and homotetramer.</text>
</comment>
<comment type="subcellular location">
    <subcellularLocation>
        <location evidence="1">Golgi apparatus</location>
        <location evidence="1">Golgi stack membrane</location>
        <topology evidence="2">Single-pass type II membrane protein</topology>
    </subcellularLocation>
</comment>
<comment type="developmental stage">
    <text evidence="7">Expressed both maternally and zygotically (PubMed:20226781). Present in one-cell embryos (PubMed:20226781). Levels decrease during epiboly and increase during segmentation stages (PubMed:20226781). At 24 hours post-fertilization (hpf), expressed in ventral craniofacial domains and along the yolk-endoderm boundary (PubMed:20226781). At 2 and 3 days post-fertilization (dpf), widely expressed throughout the head, appearing in the pharyngeal arches, eye, fin bud, neurocranium, notochord and brain (PubMed:20226781). At 5 dpf, expression localizes to the developing pharyngeal arch cartilages in both chondrocytes and perichondrium (PubMed:20226781).</text>
</comment>
<comment type="disruption phenotype">
    <text evidence="6">Mutants show cartilage defects due to impaired chondrogenesis and have a reduced jaw size.</text>
</comment>
<comment type="similarity">
    <text evidence="10">Belongs to the NAD(P)-dependent epimerase/dehydratase family. UDP-glucuronic acid decarboxylase subfamily.</text>
</comment>
<comment type="caution">
    <text evidence="10">It is uncertain whether Met-1 or Met-2 is the initiator.</text>
</comment>
<comment type="sequence caution" evidence="10">
    <conflict type="erroneous initiation">
        <sequence resource="EMBL-CDS" id="AAH74058"/>
    </conflict>
</comment>
<protein>
    <recommendedName>
        <fullName evidence="8">UDP-glucuronic acid decarboxylase 1</fullName>
        <ecNumber evidence="11">4.1.1.35</ecNumber>
    </recommendedName>
    <alternativeName>
        <fullName>UDP-glucuronate decarboxylase 1</fullName>
        <shortName>UXS-1</shortName>
    </alternativeName>
</protein>
<feature type="chain" id="PRO_0000183273" description="UDP-glucuronic acid decarboxylase 1">
    <location>
        <begin position="1"/>
        <end position="418"/>
    </location>
</feature>
<feature type="topological domain" description="Cytoplasmic" evidence="3">
    <location>
        <begin position="1"/>
        <end position="17"/>
    </location>
</feature>
<feature type="transmembrane region" description="Helical; Signal-anchor for type II membrane protein" evidence="3">
    <location>
        <begin position="18"/>
        <end position="38"/>
    </location>
</feature>
<feature type="topological domain" description="Lumenal" evidence="3">
    <location>
        <begin position="39"/>
        <end position="418"/>
    </location>
</feature>
<feature type="region of interest" description="Disordered" evidence="4">
    <location>
        <begin position="397"/>
        <end position="418"/>
    </location>
</feature>
<feature type="compositionally biased region" description="Basic residues" evidence="4">
    <location>
        <begin position="406"/>
        <end position="418"/>
    </location>
</feature>
<feature type="active site" description="Proton acceptor" evidence="2">
    <location>
        <position position="229"/>
    </location>
</feature>
<feature type="binding site" evidence="2">
    <location>
        <position position="96"/>
    </location>
    <ligand>
        <name>NAD(+)</name>
        <dbReference type="ChEBI" id="CHEBI:57540"/>
    </ligand>
</feature>
<feature type="binding site" evidence="2">
    <location>
        <position position="97"/>
    </location>
    <ligand>
        <name>NAD(+)</name>
        <dbReference type="ChEBI" id="CHEBI:57540"/>
    </ligand>
</feature>
<feature type="binding site" evidence="2">
    <location>
        <position position="98"/>
    </location>
    <ligand>
        <name>NAD(+)</name>
        <dbReference type="ChEBI" id="CHEBI:57540"/>
    </ligand>
</feature>
<feature type="binding site" evidence="2">
    <location>
        <position position="117"/>
    </location>
    <ligand>
        <name>NAD(+)</name>
        <dbReference type="ChEBI" id="CHEBI:57540"/>
    </ligand>
</feature>
<feature type="binding site" evidence="2">
    <location>
        <position position="118"/>
    </location>
    <ligand>
        <name>NAD(+)</name>
        <dbReference type="ChEBI" id="CHEBI:57540"/>
    </ligand>
</feature>
<feature type="binding site" evidence="2">
    <location>
        <position position="120"/>
    </location>
    <ligand>
        <name>NAD(+)</name>
        <dbReference type="ChEBI" id="CHEBI:57540"/>
    </ligand>
</feature>
<feature type="binding site" evidence="2">
    <location>
        <position position="121"/>
    </location>
    <ligand>
        <name>NAD(+)</name>
        <dbReference type="ChEBI" id="CHEBI:57540"/>
    </ligand>
</feature>
<feature type="binding site" evidence="2">
    <location>
        <position position="122"/>
    </location>
    <ligand>
        <name>NAD(+)</name>
        <dbReference type="ChEBI" id="CHEBI:57540"/>
    </ligand>
</feature>
<feature type="binding site" evidence="2">
    <location>
        <position position="142"/>
    </location>
    <ligand>
        <name>NAD(+)</name>
        <dbReference type="ChEBI" id="CHEBI:57540"/>
    </ligand>
</feature>
<feature type="binding site" evidence="2">
    <location>
        <position position="143"/>
    </location>
    <ligand>
        <name>NAD(+)</name>
        <dbReference type="ChEBI" id="CHEBI:57540"/>
    </ligand>
</feature>
<feature type="binding site" evidence="2">
    <location>
        <position position="147"/>
    </location>
    <ligand>
        <name>UDP-alpha-D-glucuronate</name>
        <dbReference type="ChEBI" id="CHEBI:58052"/>
    </ligand>
</feature>
<feature type="binding site" evidence="2">
    <location>
        <position position="148"/>
    </location>
    <ligand>
        <name>UDP-alpha-D-glucuronate</name>
        <dbReference type="ChEBI" id="CHEBI:58052"/>
    </ligand>
</feature>
<feature type="binding site" evidence="2">
    <location>
        <position position="157"/>
    </location>
    <ligand>
        <name>NAD(+)</name>
        <dbReference type="ChEBI" id="CHEBI:57540"/>
    </ligand>
</feature>
<feature type="binding site" evidence="2">
    <location>
        <position position="159"/>
    </location>
    <ligand>
        <name>NAD(+)</name>
        <dbReference type="ChEBI" id="CHEBI:57540"/>
    </ligand>
</feature>
<feature type="binding site" evidence="2">
    <location>
        <position position="175"/>
    </location>
    <ligand>
        <name>UDP-alpha-D-glucuronate</name>
        <dbReference type="ChEBI" id="CHEBI:58052"/>
    </ligand>
</feature>
<feature type="binding site" evidence="2">
    <location>
        <position position="176"/>
    </location>
    <ligand>
        <name>NAD(+)</name>
        <dbReference type="ChEBI" id="CHEBI:57540"/>
    </ligand>
</feature>
<feature type="binding site" evidence="2">
    <location>
        <position position="183"/>
    </location>
    <ligand>
        <name>UDP-alpha-D-glucuronate</name>
        <dbReference type="ChEBI" id="CHEBI:58052"/>
    </ligand>
</feature>
<feature type="binding site" evidence="2">
    <location>
        <position position="186"/>
    </location>
    <ligand>
        <name>UDP-alpha-D-glucuronate</name>
        <dbReference type="ChEBI" id="CHEBI:58052"/>
    </ligand>
</feature>
<feature type="binding site" evidence="2">
    <location>
        <position position="189"/>
    </location>
    <ligand>
        <name>UDP-alpha-D-glucuronate</name>
        <dbReference type="ChEBI" id="CHEBI:58052"/>
    </ligand>
</feature>
<feature type="binding site" evidence="2">
    <location>
        <position position="190"/>
    </location>
    <ligand>
        <name>UDP-alpha-D-glucuronate</name>
        <dbReference type="ChEBI" id="CHEBI:58052"/>
    </ligand>
</feature>
<feature type="binding site" evidence="2">
    <location>
        <position position="198"/>
    </location>
    <ligand>
        <name>NAD(+)</name>
        <dbReference type="ChEBI" id="CHEBI:57540"/>
    </ligand>
</feature>
<feature type="binding site" evidence="2">
    <location>
        <position position="229"/>
    </location>
    <ligand>
        <name>NAD(+)</name>
        <dbReference type="ChEBI" id="CHEBI:57540"/>
    </ligand>
</feature>
<feature type="binding site" evidence="2">
    <location>
        <position position="233"/>
    </location>
    <ligand>
        <name>NAD(+)</name>
        <dbReference type="ChEBI" id="CHEBI:57540"/>
    </ligand>
</feature>
<feature type="binding site" evidence="2">
    <location>
        <position position="243"/>
    </location>
    <ligand>
        <name>UDP-alpha-D-glucuronate</name>
        <dbReference type="ChEBI" id="CHEBI:58052"/>
    </ligand>
</feature>
<feature type="binding site" evidence="2">
    <location>
        <position position="246"/>
    </location>
    <ligand>
        <name>UDP-alpha-D-glucuronate</name>
        <dbReference type="ChEBI" id="CHEBI:58052"/>
    </ligand>
</feature>
<feature type="binding site" evidence="2">
    <location>
        <position position="247"/>
    </location>
    <ligand>
        <name>UDP-alpha-D-glucuronate</name>
        <dbReference type="ChEBI" id="CHEBI:58052"/>
    </ligand>
</feature>
<feature type="binding site" evidence="2">
    <location>
        <position position="259"/>
    </location>
    <ligand>
        <name>NAD(+)</name>
        <dbReference type="ChEBI" id="CHEBI:57540"/>
    </ligand>
</feature>
<feature type="binding site" evidence="2">
    <location>
        <position position="265"/>
    </location>
    <ligand>
        <name>NAD(+)</name>
        <dbReference type="ChEBI" id="CHEBI:57540"/>
    </ligand>
</feature>
<feature type="binding site" evidence="2">
    <location>
        <position position="270"/>
    </location>
    <ligand>
        <name>NAD(+)</name>
        <dbReference type="ChEBI" id="CHEBI:57540"/>
    </ligand>
</feature>
<feature type="glycosylation site" description="N-linked (GlcNAc...) asparagine" evidence="3">
    <location>
        <position position="314"/>
    </location>
</feature>
<feature type="glycosylation site" description="N-linked (GlcNAc...) asparagine" evidence="3">
    <location>
        <position position="383"/>
    </location>
</feature>
<feature type="mutagenesis site" description="In Man o' war (mow) mutant; characterized by severe craniofacial defects. Fishes show defective organization and morphogenesis of chondrocytes, perichondrium and bone." evidence="7">
    <original>R</original>
    <variation>H</variation>
    <location>
        <position position="234"/>
    </location>
</feature>
<feature type="sequence conflict" description="In Ref. 1; AAM34679." evidence="10" ref="1">
    <original>AQ</original>
    <variation>GS</variation>
    <location>
        <begin position="333"/>
        <end position="334"/>
    </location>
</feature>
<feature type="sequence conflict" description="In Ref. 1; AAM34679." evidence="10" ref="1">
    <original>P</original>
    <variation>S</variation>
    <location>
        <position position="350"/>
    </location>
</feature>
<feature type="sequence conflict" description="In Ref. 1; AAM34679." evidence="10" ref="1">
    <original>P</original>
    <variation>T</variation>
    <location>
        <position position="361"/>
    </location>
</feature>
<feature type="sequence conflict" description="In Ref. 1; AAM34679." evidence="10" ref="1">
    <original>K</original>
    <variation>R</variation>
    <location>
        <position position="365"/>
    </location>
</feature>
<evidence type="ECO:0000250" key="1">
    <source>
        <dbReference type="UniProtKB" id="Q5PQX0"/>
    </source>
</evidence>
<evidence type="ECO:0000250" key="2">
    <source>
        <dbReference type="UniProtKB" id="Q8NBZ7"/>
    </source>
</evidence>
<evidence type="ECO:0000255" key="3"/>
<evidence type="ECO:0000256" key="4">
    <source>
        <dbReference type="SAM" id="MobiDB-lite"/>
    </source>
</evidence>
<evidence type="ECO:0000269" key="5">
    <source>
    </source>
</evidence>
<evidence type="ECO:0000269" key="6">
    <source>
    </source>
</evidence>
<evidence type="ECO:0000269" key="7">
    <source>
    </source>
</evidence>
<evidence type="ECO:0000303" key="8">
    <source>
    </source>
</evidence>
<evidence type="ECO:0000303" key="9">
    <source ref="2"/>
</evidence>
<evidence type="ECO:0000305" key="10"/>
<evidence type="ECO:0000305" key="11">
    <source>
    </source>
</evidence>
<accession>Q6GMI9</accession>
<accession>Q8JHG1</accession>
<organism>
    <name type="scientific">Danio rerio</name>
    <name type="common">Zebrafish</name>
    <name type="synonym">Brachydanio rerio</name>
    <dbReference type="NCBI Taxonomy" id="7955"/>
    <lineage>
        <taxon>Eukaryota</taxon>
        <taxon>Metazoa</taxon>
        <taxon>Chordata</taxon>
        <taxon>Craniata</taxon>
        <taxon>Vertebrata</taxon>
        <taxon>Euteleostomi</taxon>
        <taxon>Actinopterygii</taxon>
        <taxon>Neopterygii</taxon>
        <taxon>Teleostei</taxon>
        <taxon>Ostariophysi</taxon>
        <taxon>Cypriniformes</taxon>
        <taxon>Danionidae</taxon>
        <taxon>Danioninae</taxon>
        <taxon>Danio</taxon>
    </lineage>
</organism>